<organism>
    <name type="scientific">Cronobacter sakazakii (strain ATCC BAA-894)</name>
    <name type="common">Enterobacter sakazakii</name>
    <dbReference type="NCBI Taxonomy" id="290339"/>
    <lineage>
        <taxon>Bacteria</taxon>
        <taxon>Pseudomonadati</taxon>
        <taxon>Pseudomonadota</taxon>
        <taxon>Gammaproteobacteria</taxon>
        <taxon>Enterobacterales</taxon>
        <taxon>Enterobacteriaceae</taxon>
        <taxon>Cronobacter</taxon>
    </lineage>
</organism>
<keyword id="KW-1185">Reference proteome</keyword>
<proteinExistence type="inferred from homology"/>
<comment type="similarity">
    <text evidence="1">Belongs to the UPF0235 family.</text>
</comment>
<evidence type="ECO:0000255" key="1">
    <source>
        <dbReference type="HAMAP-Rule" id="MF_00634"/>
    </source>
</evidence>
<protein>
    <recommendedName>
        <fullName evidence="1">UPF0235 protein ESA_00387</fullName>
    </recommendedName>
</protein>
<accession>A7MP89</accession>
<dbReference type="EMBL" id="CP000783">
    <property type="protein sequence ID" value="ABU75685.1"/>
    <property type="molecule type" value="Genomic_DNA"/>
</dbReference>
<dbReference type="SMR" id="A7MP89"/>
<dbReference type="KEGG" id="esa:ESA_00387"/>
<dbReference type="HOGENOM" id="CLU_130694_5_0_6"/>
<dbReference type="Proteomes" id="UP000000260">
    <property type="component" value="Chromosome"/>
</dbReference>
<dbReference type="GO" id="GO:0005737">
    <property type="term" value="C:cytoplasm"/>
    <property type="evidence" value="ECO:0007669"/>
    <property type="project" value="TreeGrafter"/>
</dbReference>
<dbReference type="Gene3D" id="3.30.1200.10">
    <property type="entry name" value="YggU-like"/>
    <property type="match status" value="1"/>
</dbReference>
<dbReference type="HAMAP" id="MF_00634">
    <property type="entry name" value="UPF0235"/>
    <property type="match status" value="1"/>
</dbReference>
<dbReference type="InterPro" id="IPR003746">
    <property type="entry name" value="DUF167"/>
</dbReference>
<dbReference type="InterPro" id="IPR036591">
    <property type="entry name" value="YggU-like_sf"/>
</dbReference>
<dbReference type="NCBIfam" id="TIGR00251">
    <property type="entry name" value="DUF167 family protein"/>
    <property type="match status" value="1"/>
</dbReference>
<dbReference type="NCBIfam" id="NF003466">
    <property type="entry name" value="PRK05090.1"/>
    <property type="match status" value="1"/>
</dbReference>
<dbReference type="PANTHER" id="PTHR13420">
    <property type="entry name" value="UPF0235 PROTEIN C15ORF40"/>
    <property type="match status" value="1"/>
</dbReference>
<dbReference type="PANTHER" id="PTHR13420:SF7">
    <property type="entry name" value="UPF0235 PROTEIN C15ORF40"/>
    <property type="match status" value="1"/>
</dbReference>
<dbReference type="Pfam" id="PF02594">
    <property type="entry name" value="DUF167"/>
    <property type="match status" value="1"/>
</dbReference>
<dbReference type="SMART" id="SM01152">
    <property type="entry name" value="DUF167"/>
    <property type="match status" value="1"/>
</dbReference>
<dbReference type="SUPFAM" id="SSF69786">
    <property type="entry name" value="YggU-like"/>
    <property type="match status" value="1"/>
</dbReference>
<feature type="chain" id="PRO_1000056767" description="UPF0235 protein ESA_00387">
    <location>
        <begin position="1"/>
        <end position="96"/>
    </location>
</feature>
<name>Y387_CROS8</name>
<reference key="1">
    <citation type="journal article" date="2010" name="PLoS ONE">
        <title>Genome sequence of Cronobacter sakazakii BAA-894 and comparative genomic hybridization analysis with other Cronobacter species.</title>
        <authorList>
            <person name="Kucerova E."/>
            <person name="Clifton S.W."/>
            <person name="Xia X.Q."/>
            <person name="Long F."/>
            <person name="Porwollik S."/>
            <person name="Fulton L."/>
            <person name="Fronick C."/>
            <person name="Minx P."/>
            <person name="Kyung K."/>
            <person name="Warren W."/>
            <person name="Fulton R."/>
            <person name="Feng D."/>
            <person name="Wollam A."/>
            <person name="Shah N."/>
            <person name="Bhonagiri V."/>
            <person name="Nash W.E."/>
            <person name="Hallsworth-Pepin K."/>
            <person name="Wilson R.K."/>
            <person name="McClelland M."/>
            <person name="Forsythe S.J."/>
        </authorList>
    </citation>
    <scope>NUCLEOTIDE SEQUENCE [LARGE SCALE GENOMIC DNA]</scope>
    <source>
        <strain>ATCC BAA-894</strain>
    </source>
</reference>
<gene>
    <name type="ordered locus">ESA_00387</name>
</gene>
<sequence>MSAVSKTVDGLVLRLYIQPKASRDSIIGLHGDELKVAITAPPVDGQANAHLVKYLAKQFRVAKSQVVIEKGELGRHKQVKIIEPQQIPTEVAAVTD</sequence>